<dbReference type="EC" id="3.5.1.5" evidence="1"/>
<dbReference type="EMBL" id="AL939108">
    <property type="protein sequence ID" value="CAC01459.1"/>
    <property type="molecule type" value="Genomic_DNA"/>
</dbReference>
<dbReference type="RefSeq" id="NP_625523.1">
    <property type="nucleotide sequence ID" value="NC_003888.3"/>
</dbReference>
<dbReference type="RefSeq" id="WP_003977596.1">
    <property type="nucleotide sequence ID" value="NZ_VNID01000006.1"/>
</dbReference>
<dbReference type="SMR" id="Q9FCD2"/>
<dbReference type="FunCoup" id="Q9FCD2">
    <property type="interactions" value="19"/>
</dbReference>
<dbReference type="STRING" id="100226.gene:17758818"/>
<dbReference type="PaxDb" id="100226-SCO1235"/>
<dbReference type="KEGG" id="sco:SCO1235"/>
<dbReference type="PATRIC" id="fig|100226.15.peg.1234"/>
<dbReference type="eggNOG" id="COG0832">
    <property type="taxonomic scope" value="Bacteria"/>
</dbReference>
<dbReference type="HOGENOM" id="CLU_129707_1_0_11"/>
<dbReference type="InParanoid" id="Q9FCD2"/>
<dbReference type="OrthoDB" id="9797217at2"/>
<dbReference type="PhylomeDB" id="Q9FCD2"/>
<dbReference type="UniPathway" id="UPA00258">
    <property type="reaction ID" value="UER00370"/>
</dbReference>
<dbReference type="Proteomes" id="UP000001973">
    <property type="component" value="Chromosome"/>
</dbReference>
<dbReference type="GO" id="GO:0035550">
    <property type="term" value="C:urease complex"/>
    <property type="evidence" value="ECO:0007669"/>
    <property type="project" value="InterPro"/>
</dbReference>
<dbReference type="GO" id="GO:0009039">
    <property type="term" value="F:urease activity"/>
    <property type="evidence" value="ECO:0000318"/>
    <property type="project" value="GO_Central"/>
</dbReference>
<dbReference type="GO" id="GO:0043419">
    <property type="term" value="P:urea catabolic process"/>
    <property type="evidence" value="ECO:0000318"/>
    <property type="project" value="GO_Central"/>
</dbReference>
<dbReference type="CDD" id="cd00407">
    <property type="entry name" value="Urease_beta"/>
    <property type="match status" value="1"/>
</dbReference>
<dbReference type="Gene3D" id="2.10.150.10">
    <property type="entry name" value="Urease, beta subunit"/>
    <property type="match status" value="1"/>
</dbReference>
<dbReference type="HAMAP" id="MF_01954">
    <property type="entry name" value="Urease_beta"/>
    <property type="match status" value="1"/>
</dbReference>
<dbReference type="InterPro" id="IPR002019">
    <property type="entry name" value="Urease_beta-like"/>
</dbReference>
<dbReference type="InterPro" id="IPR036461">
    <property type="entry name" value="Urease_betasu_sf"/>
</dbReference>
<dbReference type="InterPro" id="IPR050069">
    <property type="entry name" value="Urease_subunit"/>
</dbReference>
<dbReference type="NCBIfam" id="NF009682">
    <property type="entry name" value="PRK13203.1"/>
    <property type="match status" value="1"/>
</dbReference>
<dbReference type="NCBIfam" id="TIGR00192">
    <property type="entry name" value="urease_beta"/>
    <property type="match status" value="1"/>
</dbReference>
<dbReference type="PANTHER" id="PTHR33569">
    <property type="entry name" value="UREASE"/>
    <property type="match status" value="1"/>
</dbReference>
<dbReference type="PANTHER" id="PTHR33569:SF1">
    <property type="entry name" value="UREASE"/>
    <property type="match status" value="1"/>
</dbReference>
<dbReference type="Pfam" id="PF00699">
    <property type="entry name" value="Urease_beta"/>
    <property type="match status" value="1"/>
</dbReference>
<dbReference type="SUPFAM" id="SSF51278">
    <property type="entry name" value="Urease, beta-subunit"/>
    <property type="match status" value="1"/>
</dbReference>
<proteinExistence type="inferred from homology"/>
<keyword id="KW-0963">Cytoplasm</keyword>
<keyword id="KW-0378">Hydrolase</keyword>
<keyword id="KW-1185">Reference proteome</keyword>
<feature type="chain" id="PRO_0000234278" description="Urease subunit beta">
    <location>
        <begin position="1"/>
        <end position="103"/>
    </location>
</feature>
<organism>
    <name type="scientific">Streptomyces coelicolor (strain ATCC BAA-471 / A3(2) / M145)</name>
    <dbReference type="NCBI Taxonomy" id="100226"/>
    <lineage>
        <taxon>Bacteria</taxon>
        <taxon>Bacillati</taxon>
        <taxon>Actinomycetota</taxon>
        <taxon>Actinomycetes</taxon>
        <taxon>Kitasatosporales</taxon>
        <taxon>Streptomycetaceae</taxon>
        <taxon>Streptomyces</taxon>
        <taxon>Streptomyces albidoflavus group</taxon>
    </lineage>
</organism>
<accession>Q9FCD2</accession>
<comment type="catalytic activity">
    <reaction evidence="1">
        <text>urea + 2 H2O + H(+) = hydrogencarbonate + 2 NH4(+)</text>
        <dbReference type="Rhea" id="RHEA:20557"/>
        <dbReference type="ChEBI" id="CHEBI:15377"/>
        <dbReference type="ChEBI" id="CHEBI:15378"/>
        <dbReference type="ChEBI" id="CHEBI:16199"/>
        <dbReference type="ChEBI" id="CHEBI:17544"/>
        <dbReference type="ChEBI" id="CHEBI:28938"/>
        <dbReference type="EC" id="3.5.1.5"/>
    </reaction>
</comment>
<comment type="pathway">
    <text evidence="1">Nitrogen metabolism; urea degradation; CO(2) and NH(3) from urea (urease route): step 1/1.</text>
</comment>
<comment type="subunit">
    <text evidence="1">Heterotrimer of UreA (gamma), UreB (beta) and UreC (alpha) subunits. Three heterotrimers associate to form the active enzyme.</text>
</comment>
<comment type="subcellular location">
    <subcellularLocation>
        <location evidence="1">Cytoplasm</location>
    </subcellularLocation>
</comment>
<comment type="similarity">
    <text evidence="1">Belongs to the urease beta subunit family.</text>
</comment>
<gene>
    <name evidence="1" type="primary">ureB</name>
    <name type="ordered locus">SCO1235</name>
    <name type="ORF">2SCG1.10c</name>
</gene>
<reference key="1">
    <citation type="journal article" date="2002" name="Nature">
        <title>Complete genome sequence of the model actinomycete Streptomyces coelicolor A3(2).</title>
        <authorList>
            <person name="Bentley S.D."/>
            <person name="Chater K.F."/>
            <person name="Cerdeno-Tarraga A.-M."/>
            <person name="Challis G.L."/>
            <person name="Thomson N.R."/>
            <person name="James K.D."/>
            <person name="Harris D.E."/>
            <person name="Quail M.A."/>
            <person name="Kieser H."/>
            <person name="Harper D."/>
            <person name="Bateman A."/>
            <person name="Brown S."/>
            <person name="Chandra G."/>
            <person name="Chen C.W."/>
            <person name="Collins M."/>
            <person name="Cronin A."/>
            <person name="Fraser A."/>
            <person name="Goble A."/>
            <person name="Hidalgo J."/>
            <person name="Hornsby T."/>
            <person name="Howarth S."/>
            <person name="Huang C.-H."/>
            <person name="Kieser T."/>
            <person name="Larke L."/>
            <person name="Murphy L.D."/>
            <person name="Oliver K."/>
            <person name="O'Neil S."/>
            <person name="Rabbinowitsch E."/>
            <person name="Rajandream M.A."/>
            <person name="Rutherford K.M."/>
            <person name="Rutter S."/>
            <person name="Seeger K."/>
            <person name="Saunders D."/>
            <person name="Sharp S."/>
            <person name="Squares R."/>
            <person name="Squares S."/>
            <person name="Taylor K."/>
            <person name="Warren T."/>
            <person name="Wietzorrek A."/>
            <person name="Woodward J.R."/>
            <person name="Barrell B.G."/>
            <person name="Parkhill J."/>
            <person name="Hopwood D.A."/>
        </authorList>
    </citation>
    <scope>NUCLEOTIDE SEQUENCE [LARGE SCALE GENOMIC DNA]</scope>
    <source>
        <strain>ATCC BAA-471 / A3(2) / M145</strain>
    </source>
</reference>
<protein>
    <recommendedName>
        <fullName evidence="1">Urease subunit beta</fullName>
        <ecNumber evidence="1">3.5.1.5</ecNumber>
    </recommendedName>
    <alternativeName>
        <fullName evidence="1">Urea amidohydrolase subunit beta</fullName>
    </alternativeName>
</protein>
<sequence length="103" mass="10825">MIPGEILFADEPVAFNEGREAVRLTVLNTADRPVQVGSHYHFAEANPGLEFDRAAAHGRRLDIAAGTAVRFEPGIPVDVRLIPLAGARVVVGLRGATGGALDA</sequence>
<evidence type="ECO:0000255" key="1">
    <source>
        <dbReference type="HAMAP-Rule" id="MF_01954"/>
    </source>
</evidence>
<name>URE2_STRCO</name>